<comment type="function">
    <text evidence="1">Part of the beta sliding clamp loading complex, which hydrolyzes ATP to load the beta clamp onto primed DNA to form the DNA replication pre-initiation complex. DNA polymerase III is a complex, multichain enzyme responsible for most of the replicative synthesis in bacteria. This DNA polymerase also exhibits 3' to 5' exonuclease activity. This subunit may stabilize YoaA and/or stimulate the helicase activity of YoaA (By similarity).</text>
</comment>
<comment type="catalytic activity">
    <reaction>
        <text>DNA(n) + a 2'-deoxyribonucleoside 5'-triphosphate = DNA(n+1) + diphosphate</text>
        <dbReference type="Rhea" id="RHEA:22508"/>
        <dbReference type="Rhea" id="RHEA-COMP:17339"/>
        <dbReference type="Rhea" id="RHEA-COMP:17340"/>
        <dbReference type="ChEBI" id="CHEBI:33019"/>
        <dbReference type="ChEBI" id="CHEBI:61560"/>
        <dbReference type="ChEBI" id="CHEBI:173112"/>
        <dbReference type="EC" id="2.7.7.7"/>
    </reaction>
</comment>
<comment type="subunit">
    <text evidence="1">DNA polymerase III contains a core (composed of alpha, epsilon and theta chains) that associates with a tau subunit. This core dimerizes to form the POLIII' complex. PolIII' associates with the gamma complex (composed of gamma, delta, delta', psi and chi chains) and with the beta chain to form the complete DNA polymerase III complex. Interacts directly with the psi subunit (holD). The only subunit of the DNA polymerase III holoenzyme known to interact with single-stranded DNA binding protein (SSB), interacts directly with DNA helicase YoaA (By similarity).</text>
</comment>
<comment type="similarity">
    <text evidence="2">Belongs to the DNA polymerase III chi/HolC chain family.</text>
</comment>
<reference key="1">
    <citation type="journal article" date="1995" name="Science">
        <title>Whole-genome random sequencing and assembly of Haemophilus influenzae Rd.</title>
        <authorList>
            <person name="Fleischmann R.D."/>
            <person name="Adams M.D."/>
            <person name="White O."/>
            <person name="Clayton R.A."/>
            <person name="Kirkness E.F."/>
            <person name="Kerlavage A.R."/>
            <person name="Bult C.J."/>
            <person name="Tomb J.-F."/>
            <person name="Dougherty B.A."/>
            <person name="Merrick J.M."/>
            <person name="McKenney K."/>
            <person name="Sutton G.G."/>
            <person name="FitzHugh W."/>
            <person name="Fields C.A."/>
            <person name="Gocayne J.D."/>
            <person name="Scott J.D."/>
            <person name="Shirley R."/>
            <person name="Liu L.-I."/>
            <person name="Glodek A."/>
            <person name="Kelley J.M."/>
            <person name="Weidman J.F."/>
            <person name="Phillips C.A."/>
            <person name="Spriggs T."/>
            <person name="Hedblom E."/>
            <person name="Cotton M.D."/>
            <person name="Utterback T.R."/>
            <person name="Hanna M.C."/>
            <person name="Nguyen D.T."/>
            <person name="Saudek D.M."/>
            <person name="Brandon R.C."/>
            <person name="Fine L.D."/>
            <person name="Fritchman J.L."/>
            <person name="Fuhrmann J.L."/>
            <person name="Geoghagen N.S.M."/>
            <person name="Gnehm C.L."/>
            <person name="McDonald L.A."/>
            <person name="Small K.V."/>
            <person name="Fraser C.M."/>
            <person name="Smith H.O."/>
            <person name="Venter J.C."/>
        </authorList>
    </citation>
    <scope>NUCLEOTIDE SEQUENCE [LARGE SCALE GENOMIC DNA]</scope>
    <source>
        <strain>ATCC 51907 / DSM 11121 / KW20 / Rd</strain>
    </source>
</reference>
<reference key="2">
    <citation type="journal article" date="1994" name="Gene">
        <title>Cloning, analysis and expression of the HindIII R-M-encoding genes.</title>
        <authorList>
            <person name="Nwankwo D.O."/>
            <person name="Moran L.S."/>
            <person name="Slatko B.E."/>
            <person name="Waite-Rees P.A."/>
            <person name="Dorner L.F."/>
            <person name="Benner J.S."/>
            <person name="Wilson G.G."/>
        </authorList>
    </citation>
    <scope>NUCLEOTIDE SEQUENCE [GENOMIC DNA] OF 57-144</scope>
    <source>
        <strain>ATCC 51907 / DSM 11121 / KW20 / Rd</strain>
    </source>
</reference>
<gene>
    <name type="primary">holC</name>
    <name type="ordered locus">HI_1397</name>
</gene>
<sequence length="144" mass="16636">MAKTAQFYILTENCTLTVEEIACNLAASIWRSGKKVLISCESEAQALEIDERLWQRDPNEFVPHNLSGEATQYPTPIEISWLGKRNLQRRDLLINLQQEIPDFSHSFTQIIDFVPKDDALKTQARERYKQLRLQGWNLSTENVG</sequence>
<feature type="chain" id="PRO_0000105518" description="DNA polymerase III subunit chi">
    <location>
        <begin position="1"/>
        <end position="144"/>
    </location>
</feature>
<protein>
    <recommendedName>
        <fullName evidence="1">DNA polymerase III subunit chi</fullName>
        <ecNumber>2.7.7.7</ecNumber>
    </recommendedName>
    <alternativeName>
        <fullName evidence="2">Accessory clamp loader complex subunit chi</fullName>
    </alternativeName>
    <alternativeName>
        <fullName evidence="2">Replication clamp loader subunit HolC</fullName>
    </alternativeName>
</protein>
<accession>P43749</accession>
<keyword id="KW-0235">DNA replication</keyword>
<keyword id="KW-0239">DNA-directed DNA polymerase</keyword>
<keyword id="KW-0548">Nucleotidyltransferase</keyword>
<keyword id="KW-1185">Reference proteome</keyword>
<keyword id="KW-0808">Transferase</keyword>
<organism>
    <name type="scientific">Haemophilus influenzae (strain ATCC 51907 / DSM 11121 / KW20 / Rd)</name>
    <dbReference type="NCBI Taxonomy" id="71421"/>
    <lineage>
        <taxon>Bacteria</taxon>
        <taxon>Pseudomonadati</taxon>
        <taxon>Pseudomonadota</taxon>
        <taxon>Gammaproteobacteria</taxon>
        <taxon>Pasteurellales</taxon>
        <taxon>Pasteurellaceae</taxon>
        <taxon>Haemophilus</taxon>
    </lineage>
</organism>
<name>HOLC_HAEIN</name>
<dbReference type="EC" id="2.7.7.7"/>
<dbReference type="EMBL" id="L42023">
    <property type="protein sequence ID" value="AAC23044.1"/>
    <property type="molecule type" value="Genomic_DNA"/>
</dbReference>
<dbReference type="EMBL" id="L15391">
    <property type="protein sequence ID" value="AAA61957.1"/>
    <property type="molecule type" value="Genomic_DNA"/>
</dbReference>
<dbReference type="PIR" id="I64121">
    <property type="entry name" value="I64121"/>
</dbReference>
<dbReference type="RefSeq" id="NP_439550.1">
    <property type="nucleotide sequence ID" value="NC_000907.1"/>
</dbReference>
<dbReference type="SMR" id="P43749"/>
<dbReference type="STRING" id="71421.HI_1397"/>
<dbReference type="EnsemblBacteria" id="AAC23044">
    <property type="protein sequence ID" value="AAC23044"/>
    <property type="gene ID" value="HI_1397"/>
</dbReference>
<dbReference type="KEGG" id="hin:HI_1397"/>
<dbReference type="PATRIC" id="fig|71421.8.peg.1457"/>
<dbReference type="eggNOG" id="COG2927">
    <property type="taxonomic scope" value="Bacteria"/>
</dbReference>
<dbReference type="HOGENOM" id="CLU_131584_0_0_6"/>
<dbReference type="OrthoDB" id="5297568at2"/>
<dbReference type="PhylomeDB" id="P43749"/>
<dbReference type="BioCyc" id="HINF71421:G1GJ1-1424-MONOMER"/>
<dbReference type="Proteomes" id="UP000000579">
    <property type="component" value="Chromosome"/>
</dbReference>
<dbReference type="GO" id="GO:0003677">
    <property type="term" value="F:DNA binding"/>
    <property type="evidence" value="ECO:0007669"/>
    <property type="project" value="InterPro"/>
</dbReference>
<dbReference type="GO" id="GO:0003887">
    <property type="term" value="F:DNA-directed DNA polymerase activity"/>
    <property type="evidence" value="ECO:0007669"/>
    <property type="project" value="UniProtKB-KW"/>
</dbReference>
<dbReference type="GO" id="GO:0006260">
    <property type="term" value="P:DNA replication"/>
    <property type="evidence" value="ECO:0007669"/>
    <property type="project" value="UniProtKB-KW"/>
</dbReference>
<dbReference type="GO" id="GO:0032298">
    <property type="term" value="P:positive regulation of DNA-templated DNA replication initiation"/>
    <property type="evidence" value="ECO:0000318"/>
    <property type="project" value="GO_Central"/>
</dbReference>
<dbReference type="Gene3D" id="3.40.50.10110">
    <property type="entry name" value="DNA polymerase III subunit chi"/>
    <property type="match status" value="1"/>
</dbReference>
<dbReference type="InterPro" id="IPR007459">
    <property type="entry name" value="DNA_pol3_chi"/>
</dbReference>
<dbReference type="InterPro" id="IPR036768">
    <property type="entry name" value="PolIII_chi_sf"/>
</dbReference>
<dbReference type="PANTHER" id="PTHR38767">
    <property type="entry name" value="DNA POLYMERASE III SUBUNIT CHI"/>
    <property type="match status" value="1"/>
</dbReference>
<dbReference type="PANTHER" id="PTHR38767:SF1">
    <property type="entry name" value="DNA POLYMERASE III SUBUNIT CHI"/>
    <property type="match status" value="1"/>
</dbReference>
<dbReference type="Pfam" id="PF04364">
    <property type="entry name" value="DNA_pol3_chi"/>
    <property type="match status" value="1"/>
</dbReference>
<dbReference type="SUPFAM" id="SSF102400">
    <property type="entry name" value="DNA polymerase III chi subunit"/>
    <property type="match status" value="1"/>
</dbReference>
<evidence type="ECO:0000250" key="1">
    <source>
        <dbReference type="UniProtKB" id="P28905"/>
    </source>
</evidence>
<evidence type="ECO:0000305" key="2"/>
<proteinExistence type="inferred from homology"/>